<evidence type="ECO:0000250" key="1"/>
<evidence type="ECO:0000255" key="2">
    <source>
        <dbReference type="HAMAP-Rule" id="MF_00492"/>
    </source>
</evidence>
<accession>B8CSD3</accession>
<protein>
    <recommendedName>
        <fullName evidence="2">Transaldolase</fullName>
        <ecNumber evidence="2">2.2.1.2</ecNumber>
    </recommendedName>
</protein>
<name>TAL_SHEPW</name>
<reference key="1">
    <citation type="journal article" date="2008" name="PLoS ONE">
        <title>Environmental adaptation: genomic analysis of the piezotolerant and psychrotolerant deep-sea iron reducing bacterium Shewanella piezotolerans WP3.</title>
        <authorList>
            <person name="Wang F."/>
            <person name="Wang J."/>
            <person name="Jian H."/>
            <person name="Zhang B."/>
            <person name="Li S."/>
            <person name="Wang F."/>
            <person name="Zeng X."/>
            <person name="Gao L."/>
            <person name="Bartlett D.H."/>
            <person name="Yu J."/>
            <person name="Hu S."/>
            <person name="Xiao X."/>
        </authorList>
    </citation>
    <scope>NUCLEOTIDE SEQUENCE [LARGE SCALE GENOMIC DNA]</scope>
    <source>
        <strain>WP3 / JCM 13877</strain>
    </source>
</reference>
<feature type="chain" id="PRO_1000126256" description="Transaldolase">
    <location>
        <begin position="1"/>
        <end position="318"/>
    </location>
</feature>
<feature type="active site" description="Schiff-base intermediate with substrate" evidence="2">
    <location>
        <position position="132"/>
    </location>
</feature>
<keyword id="KW-0963">Cytoplasm</keyword>
<keyword id="KW-0570">Pentose shunt</keyword>
<keyword id="KW-0704">Schiff base</keyword>
<keyword id="KW-0808">Transferase</keyword>
<proteinExistence type="inferred from homology"/>
<comment type="function">
    <text evidence="2">Transaldolase is important for the balance of metabolites in the pentose-phosphate pathway.</text>
</comment>
<comment type="catalytic activity">
    <reaction evidence="2">
        <text>D-sedoheptulose 7-phosphate + D-glyceraldehyde 3-phosphate = D-erythrose 4-phosphate + beta-D-fructose 6-phosphate</text>
        <dbReference type="Rhea" id="RHEA:17053"/>
        <dbReference type="ChEBI" id="CHEBI:16897"/>
        <dbReference type="ChEBI" id="CHEBI:57483"/>
        <dbReference type="ChEBI" id="CHEBI:57634"/>
        <dbReference type="ChEBI" id="CHEBI:59776"/>
        <dbReference type="EC" id="2.2.1.2"/>
    </reaction>
</comment>
<comment type="pathway">
    <text evidence="2">Carbohydrate degradation; pentose phosphate pathway; D-glyceraldehyde 3-phosphate and beta-D-fructose 6-phosphate from D-ribose 5-phosphate and D-xylulose 5-phosphate (non-oxidative stage): step 2/3.</text>
</comment>
<comment type="subunit">
    <text evidence="1">Homodimer.</text>
</comment>
<comment type="subcellular location">
    <subcellularLocation>
        <location evidence="2">Cytoplasm</location>
    </subcellularLocation>
</comment>
<comment type="similarity">
    <text evidence="2">Belongs to the transaldolase family. Type 1 subfamily.</text>
</comment>
<gene>
    <name evidence="2" type="primary">tal</name>
    <name type="ordered locus">swp_3741</name>
</gene>
<organism>
    <name type="scientific">Shewanella piezotolerans (strain WP3 / JCM 13877)</name>
    <dbReference type="NCBI Taxonomy" id="225849"/>
    <lineage>
        <taxon>Bacteria</taxon>
        <taxon>Pseudomonadati</taxon>
        <taxon>Pseudomonadota</taxon>
        <taxon>Gammaproteobacteria</taxon>
        <taxon>Alteromonadales</taxon>
        <taxon>Shewanellaceae</taxon>
        <taxon>Shewanella</taxon>
    </lineage>
</organism>
<dbReference type="EC" id="2.2.1.2" evidence="2"/>
<dbReference type="EMBL" id="CP000472">
    <property type="protein sequence ID" value="ACJ30423.1"/>
    <property type="molecule type" value="Genomic_DNA"/>
</dbReference>
<dbReference type="RefSeq" id="WP_020913767.1">
    <property type="nucleotide sequence ID" value="NC_011566.1"/>
</dbReference>
<dbReference type="SMR" id="B8CSD3"/>
<dbReference type="STRING" id="225849.swp_3741"/>
<dbReference type="KEGG" id="swp:swp_3741"/>
<dbReference type="eggNOG" id="COG0176">
    <property type="taxonomic scope" value="Bacteria"/>
</dbReference>
<dbReference type="HOGENOM" id="CLU_047470_0_1_6"/>
<dbReference type="OrthoDB" id="9809101at2"/>
<dbReference type="UniPathway" id="UPA00115">
    <property type="reaction ID" value="UER00414"/>
</dbReference>
<dbReference type="Proteomes" id="UP000000753">
    <property type="component" value="Chromosome"/>
</dbReference>
<dbReference type="GO" id="GO:0005829">
    <property type="term" value="C:cytosol"/>
    <property type="evidence" value="ECO:0007669"/>
    <property type="project" value="TreeGrafter"/>
</dbReference>
<dbReference type="GO" id="GO:0004801">
    <property type="term" value="F:transaldolase activity"/>
    <property type="evidence" value="ECO:0000250"/>
    <property type="project" value="UniProtKB"/>
</dbReference>
<dbReference type="GO" id="GO:0005975">
    <property type="term" value="P:carbohydrate metabolic process"/>
    <property type="evidence" value="ECO:0007669"/>
    <property type="project" value="InterPro"/>
</dbReference>
<dbReference type="GO" id="GO:0006098">
    <property type="term" value="P:pentose-phosphate shunt"/>
    <property type="evidence" value="ECO:0007669"/>
    <property type="project" value="UniProtKB-UniRule"/>
</dbReference>
<dbReference type="CDD" id="cd00957">
    <property type="entry name" value="Transaldolase_TalAB"/>
    <property type="match status" value="1"/>
</dbReference>
<dbReference type="FunFam" id="3.20.20.70:FF:000002">
    <property type="entry name" value="Transaldolase"/>
    <property type="match status" value="1"/>
</dbReference>
<dbReference type="Gene3D" id="3.20.20.70">
    <property type="entry name" value="Aldolase class I"/>
    <property type="match status" value="1"/>
</dbReference>
<dbReference type="HAMAP" id="MF_00492">
    <property type="entry name" value="Transaldolase_1"/>
    <property type="match status" value="1"/>
</dbReference>
<dbReference type="InterPro" id="IPR013785">
    <property type="entry name" value="Aldolase_TIM"/>
</dbReference>
<dbReference type="InterPro" id="IPR001585">
    <property type="entry name" value="TAL/FSA"/>
</dbReference>
<dbReference type="InterPro" id="IPR004730">
    <property type="entry name" value="Transaldolase_1"/>
</dbReference>
<dbReference type="InterPro" id="IPR018225">
    <property type="entry name" value="Transaldolase_AS"/>
</dbReference>
<dbReference type="NCBIfam" id="NF009001">
    <property type="entry name" value="PRK12346.1"/>
    <property type="match status" value="1"/>
</dbReference>
<dbReference type="NCBIfam" id="TIGR00874">
    <property type="entry name" value="talAB"/>
    <property type="match status" value="1"/>
</dbReference>
<dbReference type="PANTHER" id="PTHR10683">
    <property type="entry name" value="TRANSALDOLASE"/>
    <property type="match status" value="1"/>
</dbReference>
<dbReference type="PANTHER" id="PTHR10683:SF18">
    <property type="entry name" value="TRANSALDOLASE"/>
    <property type="match status" value="1"/>
</dbReference>
<dbReference type="Pfam" id="PF00923">
    <property type="entry name" value="TAL_FSA"/>
    <property type="match status" value="1"/>
</dbReference>
<dbReference type="SUPFAM" id="SSF51569">
    <property type="entry name" value="Aldolase"/>
    <property type="match status" value="1"/>
</dbReference>
<dbReference type="PROSITE" id="PS01054">
    <property type="entry name" value="TRANSALDOLASE_1"/>
    <property type="match status" value="1"/>
</dbReference>
<dbReference type="PROSITE" id="PS00958">
    <property type="entry name" value="TRANSALDOLASE_2"/>
    <property type="match status" value="1"/>
</dbReference>
<sequence length="318" mass="34948">MANTLEQLKPITTIVADTGDIEAIKRYQPEDATTNPSLILKASQIPEYSDLIENAINWAKSQSDDLEQQIEDAGDKLAVNIGLEILKIVPGRISTEVDARLSFDKTASIAKAHKLIQLYKEAGIDKSRILIKLASTWEGICAAKELEQEGINCNLTLLFSFAQARACAEAGVYLISPFVGRILDWYKKDTGLEYSAAEDPGVVSVTSIYNYYKRHGFNTVVMGASFRNTGEIIELAGCDRLTIGPALLEELSNSNTPIIQKLLPATETIAAQPAMSEAQFRWEFNEDPMAVEKLAEGIRNFAVDQGKLEVMLKAELSS</sequence>